<gene>
    <name evidence="1" type="primary">orn</name>
    <name type="ordered locus">BU574</name>
</gene>
<feature type="chain" id="PRO_0000111022" description="Oligoribonuclease">
    <location>
        <begin position="1"/>
        <end position="184"/>
    </location>
</feature>
<feature type="domain" description="Exonuclease" evidence="1">
    <location>
        <begin position="8"/>
        <end position="171"/>
    </location>
</feature>
<feature type="active site" evidence="1">
    <location>
        <position position="129"/>
    </location>
</feature>
<dbReference type="EC" id="3.1.15.-" evidence="1"/>
<dbReference type="EMBL" id="BA000003">
    <property type="protein sequence ID" value="BAB13264.1"/>
    <property type="molecule type" value="Genomic_DNA"/>
</dbReference>
<dbReference type="RefSeq" id="NP_240378.1">
    <property type="nucleotide sequence ID" value="NC_002528.1"/>
</dbReference>
<dbReference type="RefSeq" id="WP_010896170.1">
    <property type="nucleotide sequence ID" value="NC_002528.1"/>
</dbReference>
<dbReference type="SMR" id="P57637"/>
<dbReference type="STRING" id="563178.BUAP5A_567"/>
<dbReference type="EnsemblBacteria" id="BAB13264">
    <property type="protein sequence ID" value="BAB13264"/>
    <property type="gene ID" value="BAB13264"/>
</dbReference>
<dbReference type="KEGG" id="buc:BU574"/>
<dbReference type="PATRIC" id="fig|107806.10.peg.578"/>
<dbReference type="eggNOG" id="COG1949">
    <property type="taxonomic scope" value="Bacteria"/>
</dbReference>
<dbReference type="HOGENOM" id="CLU_064761_2_0_6"/>
<dbReference type="Proteomes" id="UP000001806">
    <property type="component" value="Chromosome"/>
</dbReference>
<dbReference type="GO" id="GO:0005737">
    <property type="term" value="C:cytoplasm"/>
    <property type="evidence" value="ECO:0007669"/>
    <property type="project" value="UniProtKB-SubCell"/>
</dbReference>
<dbReference type="GO" id="GO:0000175">
    <property type="term" value="F:3'-5'-RNA exonuclease activity"/>
    <property type="evidence" value="ECO:0007669"/>
    <property type="project" value="InterPro"/>
</dbReference>
<dbReference type="GO" id="GO:0003676">
    <property type="term" value="F:nucleic acid binding"/>
    <property type="evidence" value="ECO:0007669"/>
    <property type="project" value="InterPro"/>
</dbReference>
<dbReference type="GO" id="GO:0006259">
    <property type="term" value="P:DNA metabolic process"/>
    <property type="evidence" value="ECO:0007669"/>
    <property type="project" value="UniProtKB-ARBA"/>
</dbReference>
<dbReference type="CDD" id="cd06135">
    <property type="entry name" value="Orn"/>
    <property type="match status" value="1"/>
</dbReference>
<dbReference type="FunFam" id="3.30.420.10:FF:000003">
    <property type="entry name" value="Oligoribonuclease"/>
    <property type="match status" value="1"/>
</dbReference>
<dbReference type="Gene3D" id="3.30.420.10">
    <property type="entry name" value="Ribonuclease H-like superfamily/Ribonuclease H"/>
    <property type="match status" value="1"/>
</dbReference>
<dbReference type="HAMAP" id="MF_00045">
    <property type="entry name" value="Oligoribonuclease"/>
    <property type="match status" value="1"/>
</dbReference>
<dbReference type="InterPro" id="IPR013520">
    <property type="entry name" value="Exonuclease_RNaseT/DNA_pol3"/>
</dbReference>
<dbReference type="InterPro" id="IPR022894">
    <property type="entry name" value="Oligoribonuclease"/>
</dbReference>
<dbReference type="InterPro" id="IPR012337">
    <property type="entry name" value="RNaseH-like_sf"/>
</dbReference>
<dbReference type="InterPro" id="IPR036397">
    <property type="entry name" value="RNaseH_sf"/>
</dbReference>
<dbReference type="NCBIfam" id="NF003765">
    <property type="entry name" value="PRK05359.1"/>
    <property type="match status" value="1"/>
</dbReference>
<dbReference type="PANTHER" id="PTHR11046">
    <property type="entry name" value="OLIGORIBONUCLEASE, MITOCHONDRIAL"/>
    <property type="match status" value="1"/>
</dbReference>
<dbReference type="PANTHER" id="PTHR11046:SF0">
    <property type="entry name" value="OLIGORIBONUCLEASE, MITOCHONDRIAL"/>
    <property type="match status" value="1"/>
</dbReference>
<dbReference type="Pfam" id="PF00929">
    <property type="entry name" value="RNase_T"/>
    <property type="match status" value="1"/>
</dbReference>
<dbReference type="SMART" id="SM00479">
    <property type="entry name" value="EXOIII"/>
    <property type="match status" value="1"/>
</dbReference>
<dbReference type="SUPFAM" id="SSF53098">
    <property type="entry name" value="Ribonuclease H-like"/>
    <property type="match status" value="1"/>
</dbReference>
<accession>P57637</accession>
<name>ORN_BUCAI</name>
<keyword id="KW-0963">Cytoplasm</keyword>
<keyword id="KW-0269">Exonuclease</keyword>
<keyword id="KW-0378">Hydrolase</keyword>
<keyword id="KW-0540">Nuclease</keyword>
<keyword id="KW-1185">Reference proteome</keyword>
<comment type="function">
    <text evidence="1">3'-to-5' exoribonuclease specific for small oligoribonucleotides.</text>
</comment>
<comment type="subcellular location">
    <subcellularLocation>
        <location evidence="1">Cytoplasm</location>
    </subcellularLocation>
</comment>
<comment type="similarity">
    <text evidence="1">Belongs to the oligoribonuclease family.</text>
</comment>
<reference key="1">
    <citation type="journal article" date="2000" name="Nature">
        <title>Genome sequence of the endocellular bacterial symbiont of aphids Buchnera sp. APS.</title>
        <authorList>
            <person name="Shigenobu S."/>
            <person name="Watanabe H."/>
            <person name="Hattori M."/>
            <person name="Sakaki Y."/>
            <person name="Ishikawa H."/>
        </authorList>
    </citation>
    <scope>NUCLEOTIDE SEQUENCE [LARGE SCALE GENOMIC DNA]</scope>
    <source>
        <strain>APS</strain>
    </source>
</reference>
<organism>
    <name type="scientific">Buchnera aphidicola subsp. Acyrthosiphon pisum (strain APS)</name>
    <name type="common">Acyrthosiphon pisum symbiotic bacterium</name>
    <dbReference type="NCBI Taxonomy" id="107806"/>
    <lineage>
        <taxon>Bacteria</taxon>
        <taxon>Pseudomonadati</taxon>
        <taxon>Pseudomonadota</taxon>
        <taxon>Gammaproteobacteria</taxon>
        <taxon>Enterobacterales</taxon>
        <taxon>Erwiniaceae</taxon>
        <taxon>Buchnera</taxon>
    </lineage>
</organism>
<protein>
    <recommendedName>
        <fullName evidence="1">Oligoribonuclease</fullName>
        <ecNumber evidence="1">3.1.15.-</ecNumber>
    </recommendedName>
</protein>
<evidence type="ECO:0000255" key="1">
    <source>
        <dbReference type="HAMAP-Rule" id="MF_00045"/>
    </source>
</evidence>
<sequence length="184" mass="22213">MKINKKNLIWIDLEMTGLNPKVHRIIEIATLITDTNLNIIAEGPVIPIYQKKEHILVMDEWNKRIHENNGLIKRVEKSLYNEQKAEHETILFLKKWVPIQVSPMCGNSIAQDRRFLFQYMPHLENYFHYRYIDVSTIKELAYRWNPSILDKFKKNHYHKALEDIRESVVELNFYKKNFLKFKKK</sequence>
<proteinExistence type="inferred from homology"/>